<feature type="signal peptide" evidence="2">
    <location>
        <begin position="1"/>
        <end position="18"/>
    </location>
</feature>
<feature type="propeptide" id="PRO_0000295829" evidence="1">
    <location>
        <begin position="19"/>
        <end position="24"/>
    </location>
</feature>
<feature type="chain" id="PRO_5000061215" description="Snake venom serine protease homolog KN4">
    <location>
        <begin position="25"/>
        <end position="260"/>
    </location>
</feature>
<feature type="domain" description="Peptidase S1" evidence="3">
    <location>
        <begin position="25"/>
        <end position="251"/>
    </location>
</feature>
<feature type="glycosylation site" description="N-linked (GlcNAc...) asparagine" evidence="2">
    <location>
        <position position="83"/>
    </location>
</feature>
<feature type="glycosylation site" description="N-linked (GlcNAc...) asparagine" evidence="2">
    <location>
        <position position="123"/>
    </location>
</feature>
<feature type="glycosylation site" description="N-linked (GlcNAc...) asparagine" evidence="2">
    <location>
        <position position="124"/>
    </location>
</feature>
<feature type="glycosylation site" description="N-linked (GlcNAc...) asparagine" evidence="2">
    <location>
        <position position="156"/>
    </location>
</feature>
<feature type="glycosylation site" description="N-linked (GlcNAc...) asparagine" evidence="2">
    <location>
        <position position="172"/>
    </location>
</feature>
<feature type="glycosylation site" description="N-linked (GlcNAc...) asparagine" evidence="2">
    <location>
        <position position="253"/>
    </location>
</feature>
<feature type="disulfide bond" evidence="3">
    <location>
        <begin position="31"/>
        <end position="165"/>
    </location>
</feature>
<feature type="disulfide bond" evidence="3">
    <location>
        <begin position="52"/>
        <end position="68"/>
    </location>
</feature>
<feature type="disulfide bond" evidence="3">
    <location>
        <begin position="100"/>
        <end position="258"/>
    </location>
</feature>
<feature type="disulfide bond" evidence="3">
    <location>
        <begin position="144"/>
        <end position="212"/>
    </location>
</feature>
<feature type="disulfide bond" evidence="3">
    <location>
        <begin position="176"/>
        <end position="191"/>
    </location>
</feature>
<feature type="disulfide bond" evidence="3">
    <location>
        <begin position="202"/>
        <end position="227"/>
    </location>
</feature>
<accession>Q71QJ4</accession>
<keyword id="KW-1015">Disulfide bond</keyword>
<keyword id="KW-0325">Glycoprotein</keyword>
<keyword id="KW-1199">Hemostasis impairing toxin</keyword>
<keyword id="KW-0964">Secreted</keyword>
<keyword id="KW-0721">Serine protease homolog</keyword>
<keyword id="KW-0732">Signal</keyword>
<keyword id="KW-0800">Toxin</keyword>
<name>VSPH4_TRIST</name>
<dbReference type="EMBL" id="AF395763">
    <property type="protein sequence ID" value="AAQ02893.1"/>
    <property type="molecule type" value="mRNA"/>
</dbReference>
<dbReference type="SMR" id="Q71QJ4"/>
<dbReference type="GO" id="GO:0005576">
    <property type="term" value="C:extracellular region"/>
    <property type="evidence" value="ECO:0007669"/>
    <property type="project" value="UniProtKB-SubCell"/>
</dbReference>
<dbReference type="GO" id="GO:0030141">
    <property type="term" value="C:secretory granule"/>
    <property type="evidence" value="ECO:0007669"/>
    <property type="project" value="TreeGrafter"/>
</dbReference>
<dbReference type="GO" id="GO:0004252">
    <property type="term" value="F:serine-type endopeptidase activity"/>
    <property type="evidence" value="ECO:0007669"/>
    <property type="project" value="InterPro"/>
</dbReference>
<dbReference type="GO" id="GO:0090729">
    <property type="term" value="F:toxin activity"/>
    <property type="evidence" value="ECO:0007669"/>
    <property type="project" value="UniProtKB-KW"/>
</dbReference>
<dbReference type="GO" id="GO:0006508">
    <property type="term" value="P:proteolysis"/>
    <property type="evidence" value="ECO:0007669"/>
    <property type="project" value="InterPro"/>
</dbReference>
<dbReference type="CDD" id="cd00190">
    <property type="entry name" value="Tryp_SPc"/>
    <property type="match status" value="1"/>
</dbReference>
<dbReference type="FunFam" id="2.40.10.10:FF:000158">
    <property type="entry name" value="Thrombin-like enzyme saxthrombin"/>
    <property type="match status" value="1"/>
</dbReference>
<dbReference type="FunFam" id="2.40.10.10:FF:000153">
    <property type="entry name" value="Venom plasminogen activator TSV-PA"/>
    <property type="match status" value="1"/>
</dbReference>
<dbReference type="Gene3D" id="2.40.10.10">
    <property type="entry name" value="Trypsin-like serine proteases"/>
    <property type="match status" value="2"/>
</dbReference>
<dbReference type="InterPro" id="IPR009003">
    <property type="entry name" value="Peptidase_S1_PA"/>
</dbReference>
<dbReference type="InterPro" id="IPR043504">
    <property type="entry name" value="Peptidase_S1_PA_chymotrypsin"/>
</dbReference>
<dbReference type="InterPro" id="IPR001314">
    <property type="entry name" value="Peptidase_S1A"/>
</dbReference>
<dbReference type="InterPro" id="IPR001254">
    <property type="entry name" value="Trypsin_dom"/>
</dbReference>
<dbReference type="InterPro" id="IPR033116">
    <property type="entry name" value="TRYPSIN_SER"/>
</dbReference>
<dbReference type="PANTHER" id="PTHR24271:SF47">
    <property type="entry name" value="KALLIKREIN-1"/>
    <property type="match status" value="1"/>
</dbReference>
<dbReference type="PANTHER" id="PTHR24271">
    <property type="entry name" value="KALLIKREIN-RELATED"/>
    <property type="match status" value="1"/>
</dbReference>
<dbReference type="Pfam" id="PF00089">
    <property type="entry name" value="Trypsin"/>
    <property type="match status" value="1"/>
</dbReference>
<dbReference type="PRINTS" id="PR00722">
    <property type="entry name" value="CHYMOTRYPSIN"/>
</dbReference>
<dbReference type="SMART" id="SM00020">
    <property type="entry name" value="Tryp_SPc"/>
    <property type="match status" value="1"/>
</dbReference>
<dbReference type="SUPFAM" id="SSF50494">
    <property type="entry name" value="Trypsin-like serine proteases"/>
    <property type="match status" value="1"/>
</dbReference>
<dbReference type="PROSITE" id="PS50240">
    <property type="entry name" value="TRYPSIN_DOM"/>
    <property type="match status" value="1"/>
</dbReference>
<dbReference type="PROSITE" id="PS00135">
    <property type="entry name" value="TRYPSIN_SER"/>
    <property type="match status" value="1"/>
</dbReference>
<organism>
    <name type="scientific">Trimeresurus stejnegeri</name>
    <name type="common">Chinese green tree viper</name>
    <name type="synonym">Viridovipera stejnegeri</name>
    <dbReference type="NCBI Taxonomy" id="39682"/>
    <lineage>
        <taxon>Eukaryota</taxon>
        <taxon>Metazoa</taxon>
        <taxon>Chordata</taxon>
        <taxon>Craniata</taxon>
        <taxon>Vertebrata</taxon>
        <taxon>Euteleostomi</taxon>
        <taxon>Lepidosauria</taxon>
        <taxon>Squamata</taxon>
        <taxon>Bifurcata</taxon>
        <taxon>Unidentata</taxon>
        <taxon>Episquamata</taxon>
        <taxon>Toxicofera</taxon>
        <taxon>Serpentes</taxon>
        <taxon>Colubroidea</taxon>
        <taxon>Viperidae</taxon>
        <taxon>Crotalinae</taxon>
        <taxon>Trimeresurus</taxon>
    </lineage>
</organism>
<evidence type="ECO:0000250" key="1"/>
<evidence type="ECO:0000255" key="2"/>
<evidence type="ECO:0000255" key="3">
    <source>
        <dbReference type="PROSITE-ProRule" id="PRU00274"/>
    </source>
</evidence>
<evidence type="ECO:0000305" key="4"/>
<evidence type="ECO:0000305" key="5">
    <source ref="1"/>
</evidence>
<proteinExistence type="evidence at transcript level"/>
<protein>
    <recommendedName>
        <fullName>Snake venom serine protease homolog KN4</fullName>
    </recommendedName>
    <alternativeName>
        <fullName>Serine proteinase-like protein KN4</fullName>
    </alternativeName>
</protein>
<reference key="1">
    <citation type="submission" date="2001-06" db="EMBL/GenBank/DDBJ databases">
        <title>Identification of geographic variations and cloning of venom proteins of Trimeresurus stejnegeri: serine proteases and phospholipases.</title>
        <authorList>
            <person name="Tsai I.-H."/>
            <person name="Wang Y.-M."/>
        </authorList>
    </citation>
    <scope>NUCLEOTIDE SEQUENCE [MRNA]</scope>
    <source>
        <tissue>Venom gland</tissue>
    </source>
</reference>
<comment type="function">
    <text evidence="4">Snake venom serine protease homolog that may act in the hemostasis system of the prey.</text>
</comment>
<comment type="subcellular location">
    <subcellularLocation>
        <location evidence="5">Secreted</location>
    </subcellularLocation>
</comment>
<comment type="tissue specificity">
    <text evidence="5">Expressed by the venom gland.</text>
</comment>
<comment type="similarity">
    <text evidence="4">Belongs to the peptidase S1 family. Snake venom subfamily.</text>
</comment>
<comment type="caution">
    <text evidence="4">Lacks the conserved His at position 67, which is expected to be an active site residue.</text>
</comment>
<sequence>MVLIRVLANLLILQLSYAQKSSELIIGGDECNINEHRFLVALYTFRSRRFHCGGTLINQEWVLSAARCDRKNIRIKLGMHSTNVTNEDEQRRVPKEKFFCLSSKTYTQWNKDIMLIRLNSPVNNSTHIAPLSLPSNPPFVGSVCRIMGWGTITSPNETYPDVPHCANINLFNYTVCHGAHAGLPATSRTLCAGVLEGGKDTCKGDSGGPLICNGQFQGIVSWGGDPCAQPREPGVYTKVFDHLDWIQNIIAGNTTATCPL</sequence>